<accession>P43249</accession>
<sequence>MELENIVANTVLLKAREGGGGKRKGKSKKWKEILKFPHINQCEDLRRTIDRDYCSLCDKQPVGRLLFRQFCETRPGLESYIQFLDSVAEYEVTPDEKLGEKGKEIMTKYLTPKSPVFITQVGRDLVSQTEEKLLQKPCKELFSACVQSVHDYLRGEPFHEYLDSMYFDRFLQWKWLERQPVTKNTFRQYRVLGKGGFGEVCACQVRATGKMYACKRLEKKRIKKRKGESMALNEKQILEKVNSRFVVNLAYAYETKDALCLVLTIMNGGDLKFHIYNMGNPGFEEERALFYAAEILCGLEDLHHENIVYRDLKPENILLDDYGHIRISDLGLAVKIPEGDLIRGRVGTVGYMAPEVLNNQRYGLSPDYWGLGCLIYEMIEGQSPFRGRKEKVKREEVDRRVLETEEVYSHKFSEEAKSICKMLLTKDAKQRLGCQEEGAAEVKRHPFFRNMNFKRLEAGMLDPPFVPDPRAVYCKDVLDIEQFSTVKGVNLDHTDDDFYSKFSTGSVPIPWQSEMIETECFKELNVFGPHGTLSPDLNRSHPPEPPKKGLLQRLFKRQHQNNSKSSPNSKTSFNHHINSNHVSSNSTGSS</sequence>
<gene>
    <name type="primary">GRK5</name>
    <name type="synonym">GPRK5</name>
</gene>
<keyword id="KW-0002">3D-structure</keyword>
<keyword id="KW-0053">Apoptosis</keyword>
<keyword id="KW-0067">ATP-binding</keyword>
<keyword id="KW-1003">Cell membrane</keyword>
<keyword id="KW-0963">Cytoplasm</keyword>
<keyword id="KW-0903">Direct protein sequencing</keyword>
<keyword id="KW-0418">Kinase</keyword>
<keyword id="KW-0446">Lipid-binding</keyword>
<keyword id="KW-0472">Membrane</keyword>
<keyword id="KW-0547">Nucleotide-binding</keyword>
<keyword id="KW-0539">Nucleus</keyword>
<keyword id="KW-0597">Phosphoprotein</keyword>
<keyword id="KW-1185">Reference proteome</keyword>
<keyword id="KW-0723">Serine/threonine-protein kinase</keyword>
<keyword id="KW-0808">Transferase</keyword>
<keyword id="KW-0879">Wnt signaling pathway</keyword>
<name>GRK5_BOVIN</name>
<feature type="chain" id="PRO_0000085970" description="G protein-coupled receptor kinase 5">
    <location>
        <begin position="1"/>
        <end position="590"/>
    </location>
</feature>
<feature type="domain" description="RGS" evidence="6">
    <location>
        <begin position="53"/>
        <end position="171"/>
    </location>
</feature>
<feature type="domain" description="Protein kinase" evidence="5">
    <location>
        <begin position="186"/>
        <end position="448"/>
    </location>
</feature>
<feature type="domain" description="AGC-kinase C-terminal" evidence="7">
    <location>
        <begin position="449"/>
        <end position="514"/>
    </location>
</feature>
<feature type="region of interest" description="N-terminal">
    <location>
        <begin position="1"/>
        <end position="185"/>
    </location>
</feature>
<feature type="region of interest" description="Interaction with calmodulin" evidence="1">
    <location>
        <begin position="20"/>
        <end position="39"/>
    </location>
</feature>
<feature type="region of interest" description="Sufficient for membrane localization" evidence="1">
    <location>
        <begin position="546"/>
        <end position="565"/>
    </location>
</feature>
<feature type="region of interest" description="Disordered" evidence="9">
    <location>
        <begin position="554"/>
        <end position="590"/>
    </location>
</feature>
<feature type="short sequence motif" description="Nuclear localization signal" evidence="1">
    <location>
        <begin position="388"/>
        <end position="395"/>
    </location>
</feature>
<feature type="compositionally biased region" description="Low complexity" evidence="9">
    <location>
        <begin position="561"/>
        <end position="590"/>
    </location>
</feature>
<feature type="active site" description="Proton acceptor" evidence="5 8">
    <location>
        <position position="311"/>
    </location>
</feature>
<feature type="binding site" evidence="5">
    <location>
        <begin position="192"/>
        <end position="200"/>
    </location>
    <ligand>
        <name>ATP</name>
        <dbReference type="ChEBI" id="CHEBI:30616"/>
    </ligand>
</feature>
<feature type="binding site" evidence="5">
    <location>
        <position position="215"/>
    </location>
    <ligand>
        <name>ATP</name>
        <dbReference type="ChEBI" id="CHEBI:30616"/>
    </ligand>
</feature>
<feature type="modified residue" description="Phosphoserine; by autocatalysis" evidence="10">
    <location>
        <position position="484"/>
    </location>
</feature>
<feature type="modified residue" description="Phosphothreonine; by autocatalysis" evidence="10">
    <location>
        <position position="485"/>
    </location>
</feature>
<feature type="modified residue" description="Phosphoserine" evidence="4">
    <location>
        <position position="579"/>
    </location>
</feature>
<feature type="helix" evidence="12">
    <location>
        <begin position="30"/>
        <end position="33"/>
    </location>
</feature>
<feature type="helix" evidence="12">
    <location>
        <begin position="39"/>
        <end position="42"/>
    </location>
</feature>
<feature type="helix" evidence="12">
    <location>
        <begin position="43"/>
        <end position="47"/>
    </location>
</feature>
<feature type="helix" evidence="12">
    <location>
        <begin position="53"/>
        <end position="57"/>
    </location>
</feature>
<feature type="helix" evidence="12">
    <location>
        <begin position="61"/>
        <end position="72"/>
    </location>
</feature>
<feature type="turn" evidence="12">
    <location>
        <begin position="75"/>
        <end position="77"/>
    </location>
</feature>
<feature type="helix" evidence="12">
    <location>
        <begin position="78"/>
        <end position="91"/>
    </location>
</feature>
<feature type="helix" evidence="12">
    <location>
        <begin position="98"/>
        <end position="109"/>
    </location>
</feature>
<feature type="strand" evidence="12">
    <location>
        <begin position="111"/>
        <end position="113"/>
    </location>
</feature>
<feature type="helix" evidence="12">
    <location>
        <begin position="123"/>
        <end position="135"/>
    </location>
</feature>
<feature type="helix" evidence="12">
    <location>
        <begin position="143"/>
        <end position="153"/>
    </location>
</feature>
<feature type="helix" evidence="12">
    <location>
        <begin position="156"/>
        <end position="163"/>
    </location>
</feature>
<feature type="helix" evidence="12">
    <location>
        <begin position="165"/>
        <end position="177"/>
    </location>
</feature>
<feature type="helix" evidence="12">
    <location>
        <begin position="183"/>
        <end position="185"/>
    </location>
</feature>
<feature type="strand" evidence="12">
    <location>
        <begin position="186"/>
        <end position="194"/>
    </location>
</feature>
<feature type="strand" evidence="12">
    <location>
        <begin position="196"/>
        <end position="205"/>
    </location>
</feature>
<feature type="turn" evidence="12">
    <location>
        <begin position="206"/>
        <end position="208"/>
    </location>
</feature>
<feature type="strand" evidence="12">
    <location>
        <begin position="211"/>
        <end position="218"/>
    </location>
</feature>
<feature type="helix" evidence="12">
    <location>
        <begin position="219"/>
        <end position="224"/>
    </location>
</feature>
<feature type="helix" evidence="12">
    <location>
        <begin position="228"/>
        <end position="240"/>
    </location>
</feature>
<feature type="strand" evidence="12">
    <location>
        <begin position="249"/>
        <end position="254"/>
    </location>
</feature>
<feature type="strand" evidence="12">
    <location>
        <begin position="256"/>
        <end position="263"/>
    </location>
</feature>
<feature type="helix" evidence="12">
    <location>
        <begin position="271"/>
        <end position="275"/>
    </location>
</feature>
<feature type="strand" evidence="12">
    <location>
        <begin position="277"/>
        <end position="280"/>
    </location>
</feature>
<feature type="helix" evidence="12">
    <location>
        <begin position="285"/>
        <end position="304"/>
    </location>
</feature>
<feature type="helix" evidence="12">
    <location>
        <begin position="314"/>
        <end position="316"/>
    </location>
</feature>
<feature type="strand" evidence="12">
    <location>
        <begin position="317"/>
        <end position="319"/>
    </location>
</feature>
<feature type="strand" evidence="12">
    <location>
        <begin position="325"/>
        <end position="327"/>
    </location>
</feature>
<feature type="helix" evidence="12">
    <location>
        <begin position="354"/>
        <end position="357"/>
    </location>
</feature>
<feature type="strand" evidence="12">
    <location>
        <begin position="362"/>
        <end position="364"/>
    </location>
</feature>
<feature type="helix" evidence="12">
    <location>
        <begin position="365"/>
        <end position="380"/>
    </location>
</feature>
<feature type="strand" evidence="12">
    <location>
        <begin position="381"/>
        <end position="383"/>
    </location>
</feature>
<feature type="helix" evidence="12">
    <location>
        <begin position="394"/>
        <end position="403"/>
    </location>
</feature>
<feature type="helix" evidence="12">
    <location>
        <begin position="414"/>
        <end position="423"/>
    </location>
</feature>
<feature type="helix" evidence="12">
    <location>
        <begin position="428"/>
        <end position="430"/>
    </location>
</feature>
<feature type="turn" evidence="12">
    <location>
        <begin position="436"/>
        <end position="438"/>
    </location>
</feature>
<feature type="helix" evidence="12">
    <location>
        <begin position="439"/>
        <end position="443"/>
    </location>
</feature>
<feature type="helix" evidence="12">
    <location>
        <begin position="446"/>
        <end position="448"/>
    </location>
</feature>
<feature type="helix" evidence="12">
    <location>
        <begin position="453"/>
        <end position="457"/>
    </location>
</feature>
<feature type="helix" evidence="12">
    <location>
        <begin position="494"/>
        <end position="502"/>
    </location>
</feature>
<feature type="helix" evidence="12">
    <location>
        <begin position="508"/>
        <end position="517"/>
    </location>
</feature>
<feature type="helix" evidence="12">
    <location>
        <begin position="520"/>
        <end position="524"/>
    </location>
</feature>
<feature type="strand" evidence="12">
    <location>
        <begin position="529"/>
        <end position="531"/>
    </location>
</feature>
<feature type="helix" evidence="12">
    <location>
        <begin position="535"/>
        <end position="537"/>
    </location>
</feature>
<comment type="function">
    <text evidence="1 10">Serine/threonine kinase that phosphorylates preferentially the activated forms of a variety of G-protein-coupled receptors (GPCRs). Such receptor phosphorylation initiates beta-arrestin-mediated receptor desensitization, internalization, and signaling events leading to their down-regulation. Phosphorylates a variety of GPCRs, including adrenergic receptors (Beta-2 adrenergic receptor), muscarinic acetylcholine receptors (more specifically Gi-coupled M2/M4 subtypes), dopamine receptors and opioid receptors. In addition to GPCRs, also phosphorylates various substrates: Hsc70-interacting protein/ST13, TP53/p53, HDAC5, and arrestin-1/ARRB1. Phosphorylation of ARRB1 by GRK5 inhibits G-protein independent MAPK1/MAPK3 signaling downstream of 5HT4-receptors. Phosphorylation of HDAC5, a repressor of myocyte enhancer factor 2 (MEF2) leading to nuclear export of HDAC5 and allowing MEF2-mediated transcription. Phosphorylation of TP53/p53, a crucial tumor suppressor, inhibits TP53/p53-mediated apoptosis. Phosphorylation of ST13 regulates internalization of the chemokine receptor. Phosphorylates rhodopsin (RHO) (in vitro) and a non G-protein-coupled receptor, LRP6 during Wnt signaling (in vitro) (By similarity).</text>
</comment>
<comment type="catalytic activity">
    <reaction>
        <text>[G-protein-coupled receptor] + ATP = [G-protein-coupled receptor]-phosphate + ADP + H(+)</text>
        <dbReference type="Rhea" id="RHEA:12008"/>
        <dbReference type="Rhea" id="RHEA-COMP:11260"/>
        <dbReference type="Rhea" id="RHEA-COMP:11261"/>
        <dbReference type="ChEBI" id="CHEBI:15378"/>
        <dbReference type="ChEBI" id="CHEBI:30616"/>
        <dbReference type="ChEBI" id="CHEBI:43176"/>
        <dbReference type="ChEBI" id="CHEBI:68546"/>
        <dbReference type="ChEBI" id="CHEBI:456216"/>
        <dbReference type="EC" id="2.7.11.16"/>
    </reaction>
</comment>
<comment type="activity regulation">
    <text evidence="1">Inhibited by calmodulin with an IC(50) of 50 nM. Calmodulin inhibits GRK5 association with receptor and phospholipid (By similarity).</text>
</comment>
<comment type="subunit">
    <text evidence="2 3 4">Interacts with ST13 (via the C-terminus 303-319 AA) (By similarity). Interacts with TP53/p53 (By similarity). Interacts with HTR4 (via C-terminus 330-346 AA); this interaction is promoted by 5-HT (serotonin) (By similarity). Interacts with HDAC5 (By similarity). Interacts with GIT1 (By similarity).</text>
</comment>
<comment type="subcellular location">
    <subcellularLocation>
        <location evidence="1">Cytoplasm</location>
    </subcellularLocation>
    <subcellularLocation>
        <location evidence="1">Nucleus</location>
    </subcellularLocation>
    <subcellularLocation>
        <location evidence="1">Cell membrane</location>
        <topology evidence="1">Peripheral membrane protein</topology>
    </subcellularLocation>
    <text evidence="1">Predominantly localized at the plasma membrane, targeted to the cell surface through the interaction with phospholipids. Nucleus localization is regulated in a GPCR and Ca(2+)/calmodulin-dependent fashion (By similarity).</text>
</comment>
<comment type="tissue specificity">
    <text evidence="10">Highest levels in lung, heart, retina, lingual epithelium. Very little in brain, liver, kidney.</text>
</comment>
<comment type="PTM">
    <text evidence="10">Autophosphorylated. Autophosphorylation may play a critical role in the regulation of GRK5 kinase activity.</text>
</comment>
<comment type="similarity">
    <text evidence="11">Belongs to the protein kinase superfamily. AGC Ser/Thr protein kinase family. GPRK subfamily.</text>
</comment>
<dbReference type="EC" id="2.7.11.16"/>
<dbReference type="EMBL" id="U01206">
    <property type="protein sequence ID" value="AAA17561.1"/>
    <property type="molecule type" value="mRNA"/>
</dbReference>
<dbReference type="PIR" id="A54372">
    <property type="entry name" value="A54372"/>
</dbReference>
<dbReference type="RefSeq" id="NP_776756.1">
    <property type="nucleotide sequence ID" value="NM_174331.2"/>
</dbReference>
<dbReference type="PDB" id="4WNK">
    <property type="method" value="X-ray"/>
    <property type="resolution" value="2.42 A"/>
    <property type="chains" value="A=1-590"/>
</dbReference>
<dbReference type="PDBsum" id="4WNK"/>
<dbReference type="SMR" id="P43249"/>
<dbReference type="DIP" id="DIP-60782N"/>
<dbReference type="FunCoup" id="P43249">
    <property type="interactions" value="1663"/>
</dbReference>
<dbReference type="IntAct" id="P43249">
    <property type="interactions" value="2"/>
</dbReference>
<dbReference type="STRING" id="9913.ENSBTAP00000073444"/>
<dbReference type="BindingDB" id="P43249"/>
<dbReference type="ChEMBL" id="CHEMBL3879830"/>
<dbReference type="iPTMnet" id="P43249"/>
<dbReference type="PaxDb" id="9913-ENSBTAP00000010492"/>
<dbReference type="GeneID" id="281801"/>
<dbReference type="KEGG" id="bta:281801"/>
<dbReference type="CTD" id="2869"/>
<dbReference type="VEuPathDB" id="HostDB:ENSBTAG00000007981"/>
<dbReference type="eggNOG" id="KOG0986">
    <property type="taxonomic scope" value="Eukaryota"/>
</dbReference>
<dbReference type="HOGENOM" id="CLU_000288_63_41_1"/>
<dbReference type="InParanoid" id="P43249"/>
<dbReference type="OMA" id="WQTEMME"/>
<dbReference type="OrthoDB" id="354826at2759"/>
<dbReference type="TreeFam" id="TF313940"/>
<dbReference type="BRENDA" id="2.7.11.16">
    <property type="organism ID" value="908"/>
</dbReference>
<dbReference type="Reactome" id="R-BTA-418555">
    <property type="pathway name" value="G alpha (s) signalling events"/>
</dbReference>
<dbReference type="EvolutionaryTrace" id="P43249"/>
<dbReference type="Proteomes" id="UP000009136">
    <property type="component" value="Chromosome 26"/>
</dbReference>
<dbReference type="Bgee" id="ENSBTAG00000007981">
    <property type="expression patterns" value="Expressed in esophagus and 103 other cell types or tissues"/>
</dbReference>
<dbReference type="GO" id="GO:0005737">
    <property type="term" value="C:cytoplasm"/>
    <property type="evidence" value="ECO:0000318"/>
    <property type="project" value="GO_Central"/>
</dbReference>
<dbReference type="GO" id="GO:0005634">
    <property type="term" value="C:nucleus"/>
    <property type="evidence" value="ECO:0007669"/>
    <property type="project" value="UniProtKB-SubCell"/>
</dbReference>
<dbReference type="GO" id="GO:0005886">
    <property type="term" value="C:plasma membrane"/>
    <property type="evidence" value="ECO:0000250"/>
    <property type="project" value="UniProtKB"/>
</dbReference>
<dbReference type="GO" id="GO:0005524">
    <property type="term" value="F:ATP binding"/>
    <property type="evidence" value="ECO:0007669"/>
    <property type="project" value="UniProtKB-KW"/>
</dbReference>
<dbReference type="GO" id="GO:0004703">
    <property type="term" value="F:G protein-coupled receptor kinase activity"/>
    <property type="evidence" value="ECO:0007669"/>
    <property type="project" value="UniProtKB-EC"/>
</dbReference>
<dbReference type="GO" id="GO:0008289">
    <property type="term" value="F:lipid binding"/>
    <property type="evidence" value="ECO:0007669"/>
    <property type="project" value="UniProtKB-KW"/>
</dbReference>
<dbReference type="GO" id="GO:0004672">
    <property type="term" value="F:protein kinase activity"/>
    <property type="evidence" value="ECO:0000318"/>
    <property type="project" value="GO_Central"/>
</dbReference>
<dbReference type="GO" id="GO:0004674">
    <property type="term" value="F:protein serine/threonine kinase activity"/>
    <property type="evidence" value="ECO:0000250"/>
    <property type="project" value="UniProtKB"/>
</dbReference>
<dbReference type="GO" id="GO:0006915">
    <property type="term" value="P:apoptotic process"/>
    <property type="evidence" value="ECO:0007669"/>
    <property type="project" value="UniProtKB-KW"/>
</dbReference>
<dbReference type="GO" id="GO:0043066">
    <property type="term" value="P:negative regulation of apoptotic process"/>
    <property type="evidence" value="ECO:0000250"/>
    <property type="project" value="UniProtKB"/>
</dbReference>
<dbReference type="GO" id="GO:0046777">
    <property type="term" value="P:protein autophosphorylation"/>
    <property type="evidence" value="ECO:0000250"/>
    <property type="project" value="UniProtKB"/>
</dbReference>
<dbReference type="GO" id="GO:0009966">
    <property type="term" value="P:regulation of signal transduction"/>
    <property type="evidence" value="ECO:0000318"/>
    <property type="project" value="GO_Central"/>
</dbReference>
<dbReference type="GO" id="GO:0016055">
    <property type="term" value="P:Wnt signaling pathway"/>
    <property type="evidence" value="ECO:0007669"/>
    <property type="project" value="UniProtKB-KW"/>
</dbReference>
<dbReference type="CDD" id="cd08752">
    <property type="entry name" value="RGS_GRK5"/>
    <property type="match status" value="1"/>
</dbReference>
<dbReference type="CDD" id="cd05632">
    <property type="entry name" value="STKc_GRK5"/>
    <property type="match status" value="1"/>
</dbReference>
<dbReference type="FunFam" id="1.10.167.10:FF:000017">
    <property type="entry name" value="G protein-coupled receptor kinase"/>
    <property type="match status" value="1"/>
</dbReference>
<dbReference type="FunFam" id="1.10.510.10:FF:000074">
    <property type="entry name" value="G protein-coupled receptor kinase"/>
    <property type="match status" value="1"/>
</dbReference>
<dbReference type="Gene3D" id="3.30.200.20">
    <property type="entry name" value="Phosphorylase Kinase, domain 1"/>
    <property type="match status" value="1"/>
</dbReference>
<dbReference type="Gene3D" id="1.10.167.10">
    <property type="entry name" value="Regulator of G-protein Signalling 4, domain 2"/>
    <property type="match status" value="1"/>
</dbReference>
<dbReference type="Gene3D" id="1.10.510.10">
    <property type="entry name" value="Transferase(Phosphotransferase) domain 1"/>
    <property type="match status" value="1"/>
</dbReference>
<dbReference type="InterPro" id="IPR000961">
    <property type="entry name" value="AGC-kinase_C"/>
</dbReference>
<dbReference type="InterPro" id="IPR000239">
    <property type="entry name" value="GPCR_kinase"/>
</dbReference>
<dbReference type="InterPro" id="IPR011009">
    <property type="entry name" value="Kinase-like_dom_sf"/>
</dbReference>
<dbReference type="InterPro" id="IPR000719">
    <property type="entry name" value="Prot_kinase_dom"/>
</dbReference>
<dbReference type="InterPro" id="IPR017441">
    <property type="entry name" value="Protein_kinase_ATP_BS"/>
</dbReference>
<dbReference type="InterPro" id="IPR016137">
    <property type="entry name" value="RGS"/>
</dbReference>
<dbReference type="InterPro" id="IPR036305">
    <property type="entry name" value="RGS_sf"/>
</dbReference>
<dbReference type="InterPro" id="IPR044926">
    <property type="entry name" value="RGS_subdomain_2"/>
</dbReference>
<dbReference type="InterPro" id="IPR008271">
    <property type="entry name" value="Ser/Thr_kinase_AS"/>
</dbReference>
<dbReference type="PANTHER" id="PTHR24355:SF27">
    <property type="entry name" value="G PROTEIN-COUPLED RECEPTOR KINASE 5"/>
    <property type="match status" value="1"/>
</dbReference>
<dbReference type="PANTHER" id="PTHR24355">
    <property type="entry name" value="G PROTEIN-COUPLED RECEPTOR KINASE/RIBOSOMAL PROTEIN S6 KINASE"/>
    <property type="match status" value="1"/>
</dbReference>
<dbReference type="Pfam" id="PF00069">
    <property type="entry name" value="Pkinase"/>
    <property type="match status" value="1"/>
</dbReference>
<dbReference type="Pfam" id="PF00615">
    <property type="entry name" value="RGS"/>
    <property type="match status" value="1"/>
</dbReference>
<dbReference type="PRINTS" id="PR00717">
    <property type="entry name" value="GPCRKINASE"/>
</dbReference>
<dbReference type="SMART" id="SM00315">
    <property type="entry name" value="RGS"/>
    <property type="match status" value="1"/>
</dbReference>
<dbReference type="SMART" id="SM00133">
    <property type="entry name" value="S_TK_X"/>
    <property type="match status" value="1"/>
</dbReference>
<dbReference type="SMART" id="SM00220">
    <property type="entry name" value="S_TKc"/>
    <property type="match status" value="1"/>
</dbReference>
<dbReference type="SUPFAM" id="SSF56112">
    <property type="entry name" value="Protein kinase-like (PK-like)"/>
    <property type="match status" value="1"/>
</dbReference>
<dbReference type="SUPFAM" id="SSF48097">
    <property type="entry name" value="Regulator of G-protein signaling, RGS"/>
    <property type="match status" value="1"/>
</dbReference>
<dbReference type="PROSITE" id="PS51285">
    <property type="entry name" value="AGC_KINASE_CTER"/>
    <property type="match status" value="1"/>
</dbReference>
<dbReference type="PROSITE" id="PS00107">
    <property type="entry name" value="PROTEIN_KINASE_ATP"/>
    <property type="match status" value="1"/>
</dbReference>
<dbReference type="PROSITE" id="PS50011">
    <property type="entry name" value="PROTEIN_KINASE_DOM"/>
    <property type="match status" value="1"/>
</dbReference>
<dbReference type="PROSITE" id="PS00108">
    <property type="entry name" value="PROTEIN_KINASE_ST"/>
    <property type="match status" value="1"/>
</dbReference>
<dbReference type="PROSITE" id="PS50132">
    <property type="entry name" value="RGS"/>
    <property type="match status" value="1"/>
</dbReference>
<protein>
    <recommendedName>
        <fullName>G protein-coupled receptor kinase 5</fullName>
        <ecNumber>2.7.11.16</ecNumber>
    </recommendedName>
    <alternativeName>
        <fullName>G protein-coupled receptor kinase GRK5</fullName>
    </alternativeName>
</protein>
<organism>
    <name type="scientific">Bos taurus</name>
    <name type="common">Bovine</name>
    <dbReference type="NCBI Taxonomy" id="9913"/>
    <lineage>
        <taxon>Eukaryota</taxon>
        <taxon>Metazoa</taxon>
        <taxon>Chordata</taxon>
        <taxon>Craniata</taxon>
        <taxon>Vertebrata</taxon>
        <taxon>Euteleostomi</taxon>
        <taxon>Mammalia</taxon>
        <taxon>Eutheria</taxon>
        <taxon>Laurasiatheria</taxon>
        <taxon>Artiodactyla</taxon>
        <taxon>Ruminantia</taxon>
        <taxon>Pecora</taxon>
        <taxon>Bovidae</taxon>
        <taxon>Bovinae</taxon>
        <taxon>Bos</taxon>
    </lineage>
</organism>
<reference key="1">
    <citation type="journal article" date="1994" name="J. Biol. Chem.">
        <title>Identification, purification, and characterization of GRK5, a member of the family of G protein-coupled receptor kinases.</title>
        <authorList>
            <person name="Premont R.T."/>
            <person name="Koch W.J."/>
            <person name="Inglese J."/>
            <person name="Lefkowitz R.J."/>
        </authorList>
    </citation>
    <scope>NUCLEOTIDE SEQUENCE [MRNA]</scope>
    <scope>PROTEIN SEQUENCE OF 479-491</scope>
    <scope>TISSUE SPECIFICITY</scope>
    <scope>FUNCTION</scope>
    <scope>PHOSPHORYLATION AT SER-484 AND THR-485</scope>
    <source>
        <tissue>Tongue epithelium</tissue>
    </source>
</reference>
<evidence type="ECO:0000250" key="1"/>
<evidence type="ECO:0000250" key="2">
    <source>
        <dbReference type="UniProtKB" id="P34947"/>
    </source>
</evidence>
<evidence type="ECO:0000250" key="3">
    <source>
        <dbReference type="UniProtKB" id="Q62833"/>
    </source>
</evidence>
<evidence type="ECO:0000250" key="4">
    <source>
        <dbReference type="UniProtKB" id="Q8VEB1"/>
    </source>
</evidence>
<evidence type="ECO:0000255" key="5">
    <source>
        <dbReference type="PROSITE-ProRule" id="PRU00159"/>
    </source>
</evidence>
<evidence type="ECO:0000255" key="6">
    <source>
        <dbReference type="PROSITE-ProRule" id="PRU00171"/>
    </source>
</evidence>
<evidence type="ECO:0000255" key="7">
    <source>
        <dbReference type="PROSITE-ProRule" id="PRU00618"/>
    </source>
</evidence>
<evidence type="ECO:0000255" key="8">
    <source>
        <dbReference type="PROSITE-ProRule" id="PRU10027"/>
    </source>
</evidence>
<evidence type="ECO:0000256" key="9">
    <source>
        <dbReference type="SAM" id="MobiDB-lite"/>
    </source>
</evidence>
<evidence type="ECO:0000269" key="10">
    <source>
    </source>
</evidence>
<evidence type="ECO:0000305" key="11"/>
<evidence type="ECO:0007829" key="12">
    <source>
        <dbReference type="PDB" id="4WNK"/>
    </source>
</evidence>
<proteinExistence type="evidence at protein level"/>